<keyword id="KW-0025">Alternative splicing</keyword>
<keyword id="KW-1003">Cell membrane</keyword>
<keyword id="KW-0903">Direct protein sequencing</keyword>
<keyword id="KW-1015">Disulfide bond</keyword>
<keyword id="KW-0325">Glycoprotein</keyword>
<keyword id="KW-0393">Immunoglobulin domain</keyword>
<keyword id="KW-0472">Membrane</keyword>
<keyword id="KW-0597">Phosphoprotein</keyword>
<keyword id="KW-1267">Proteomics identification</keyword>
<keyword id="KW-1185">Reference proteome</keyword>
<keyword id="KW-0677">Repeat</keyword>
<keyword id="KW-0732">Signal</keyword>
<keyword id="KW-0812">Transmembrane</keyword>
<keyword id="KW-1133">Transmembrane helix</keyword>
<accession>Q6UWL6</accession>
<accession>C9JHF1</accession>
<accession>C9JJ76</accession>
<accession>F1T0I2</accession>
<accession>Q6P1R1</accession>
<accession>Q7Z5P1</accession>
<accession>Q7Z5P2</accession>
<accession>Q96IQ8</accession>
<accession>Q9H0T1</accession>
<evidence type="ECO:0000250" key="1">
    <source>
        <dbReference type="UniProtKB" id="Q7TSU7"/>
    </source>
</evidence>
<evidence type="ECO:0000255" key="2"/>
<evidence type="ECO:0000255" key="3">
    <source>
        <dbReference type="PROSITE-ProRule" id="PRU00114"/>
    </source>
</evidence>
<evidence type="ECO:0000256" key="4">
    <source>
        <dbReference type="SAM" id="MobiDB-lite"/>
    </source>
</evidence>
<evidence type="ECO:0000269" key="5">
    <source>
    </source>
</evidence>
<evidence type="ECO:0000269" key="6">
    <source>
    </source>
</evidence>
<evidence type="ECO:0000303" key="7">
    <source>
    </source>
</evidence>
<evidence type="ECO:0000303" key="8">
    <source>
    </source>
</evidence>
<evidence type="ECO:0000305" key="9"/>
<name>KIRR2_HUMAN</name>
<sequence>MLRMRVPALLVLLFCFRGRAGPSPHFLQQPEDLVVLLGEEARLPCALGAYWGLVQWTKSGLALGGQRDLPGWSRYWISGNAANGQHDLHIRPVELEDEASYECQATQAGLRSRPAQLHVLVPPEAPQVLGGPSVSLVAGVPANLTCRSRGDARPTPELLWFRDGVLLDGATFHQTLLKEGTPGSVESTLTLTPFSHDDGATFVCRARSQALPTGRDTAITLSLQYPPEVTLSASPHTVQEGEKVIFLCQATAQPPVTGYRWAKGGSPVLGARGPRLEVVADASFLTEPVSCEVSNAVGSANRSTALDVLFGPILQAKPEPVSVDVGEDASFSCAWRGNPLPRVTWTRRGGAQVLGSGATLRLPSVGPEDAGDYVCRAEAGLSGLRGGAAEARLTVNAPPVVTALHSAPAFLRGPARLQCLVFASPAPDAVVWSWDEGFLEAGSQGRFLVETFPAPESRGGLGPGLISVLHISGTQESDFSRSFNCSARNRLGEGGAQASLGRRDLLPTVRIVAGVAAATTTLLMVITGVALCCWRHSKASASFSEQKNLMRIPGSSDGSSSRGPEEEETGSREDRGPIVHTDHSDLVLEEEGTLETKDPTNGYYKVRGVSVSLSLGEAPGGGLFLPPPSPLGPPGTPTFYDFNPHLGMVPPCRLYRARAGYLTTPHPRAFTSYIKPTSFGPPDLAPGTPPFPYAAFPTPSHPRLQTHV</sequence>
<organism>
    <name type="scientific">Homo sapiens</name>
    <name type="common">Human</name>
    <dbReference type="NCBI Taxonomy" id="9606"/>
    <lineage>
        <taxon>Eukaryota</taxon>
        <taxon>Metazoa</taxon>
        <taxon>Chordata</taxon>
        <taxon>Craniata</taxon>
        <taxon>Vertebrata</taxon>
        <taxon>Euteleostomi</taxon>
        <taxon>Mammalia</taxon>
        <taxon>Eutheria</taxon>
        <taxon>Euarchontoglires</taxon>
        <taxon>Primates</taxon>
        <taxon>Haplorrhini</taxon>
        <taxon>Catarrhini</taxon>
        <taxon>Hominidae</taxon>
        <taxon>Homo</taxon>
    </lineage>
</organism>
<gene>
    <name type="primary">KIRREL2</name>
    <name type="synonym">NEPH3</name>
    <name type="ORF">UNQ5827/PRO19646</name>
</gene>
<proteinExistence type="evidence at protein level"/>
<comment type="function">
    <text evidence="1">May regulate basal insulin secretion.</text>
</comment>
<comment type="subunit">
    <text evidence="1">Homodimer. Interacts with NPHS2/podocin (via the C-terminus). Interacts with NPHS1 (via the Ig-like domains). Interacts with FYN.</text>
</comment>
<comment type="interaction">
    <interactant intactId="EBI-10254473">
        <id>Q6UWL6</id>
    </interactant>
    <interactant intactId="EBI-741101">
        <id>Q13643</id>
        <label>FHL3</label>
    </interactant>
    <organismsDiffer>false</organismsDiffer>
    <experiments>3</experiments>
</comment>
<comment type="interaction">
    <interactant intactId="EBI-10254473">
        <id>Q6UWL6</id>
    </interactant>
    <interactant intactId="EBI-348380">
        <id>P25788</id>
        <label>PSMA3</label>
    </interactant>
    <organismsDiffer>false</organismsDiffer>
    <experiments>3</experiments>
</comment>
<comment type="interaction">
    <interactant intactId="EBI-12794590">
        <id>Q6UWL6-5</id>
    </interactant>
    <interactant intactId="EBI-741101">
        <id>Q13643</id>
        <label>FHL3</label>
    </interactant>
    <organismsDiffer>false</organismsDiffer>
    <experiments>3</experiments>
</comment>
<comment type="subcellular location">
    <subcellularLocation>
        <location evidence="1">Cell membrane</location>
        <topology evidence="2">Single-pass type I membrane protein</topology>
    </subcellularLocation>
    <text evidence="1">Localized along the sites of the cell contacts. Colocalizes with E-Cadherin and beta-catenin.</text>
</comment>
<comment type="alternative products">
    <event type="alternative splicing"/>
    <isoform>
        <id>Q6UWL6-1</id>
        <name>1</name>
        <sequence type="displayed"/>
    </isoform>
    <isoform>
        <id>Q6UWL6-2</id>
        <name>2</name>
        <name>Kirrel2a</name>
        <sequence type="described" ref="VSP_011784 VSP_011785"/>
    </isoform>
    <isoform>
        <id>Q6UWL6-3</id>
        <name>3</name>
        <name>Kirrel2b</name>
        <sequence type="described" ref="VSP_011780 VSP_011784 VSP_011785"/>
    </isoform>
    <isoform>
        <id>Q6UWL6-5</id>
        <name>5</name>
        <name>Kirrel2c</name>
        <sequence type="described" ref="VSP_011781 VSP_011783"/>
    </isoform>
</comment>
<comment type="tissue specificity">
    <text evidence="5">Highly expressed in beta-cells of the pancreatic islets.</text>
</comment>
<comment type="PTM">
    <text evidence="1">N-glycosylated.</text>
</comment>
<comment type="PTM">
    <text evidence="1">The extracellular domain is cleaved leading to the generation of a soluble fragment and a membrane-bound C-terminal fragment, which is further cleaved by gamma-secretase.</text>
</comment>
<comment type="similarity">
    <text evidence="9">Belongs to the immunoglobulin superfamily.</text>
</comment>
<comment type="sequence caution" evidence="9">
    <conflict type="miscellaneous discrepancy">
        <sequence resource="EMBL-CDS" id="AAH64925"/>
    </conflict>
    <text>Aberrant splicing.</text>
</comment>
<dbReference type="EMBL" id="AY305301">
    <property type="protein sequence ID" value="AAP72166.1"/>
    <property type="molecule type" value="mRNA"/>
</dbReference>
<dbReference type="EMBL" id="AY305302">
    <property type="protein sequence ID" value="AAP72167.1"/>
    <property type="molecule type" value="mRNA"/>
</dbReference>
<dbReference type="EMBL" id="AL136654">
    <property type="protein sequence ID" value="CAB66589.2"/>
    <property type="molecule type" value="mRNA"/>
</dbReference>
<dbReference type="EMBL" id="AY358742">
    <property type="protein sequence ID" value="AAQ89102.1"/>
    <property type="molecule type" value="mRNA"/>
</dbReference>
<dbReference type="EMBL" id="AB593116">
    <property type="protein sequence ID" value="BAJ84056.1"/>
    <property type="molecule type" value="mRNA"/>
</dbReference>
<dbReference type="EMBL" id="AC002133">
    <property type="status" value="NOT_ANNOTATED_CDS"/>
    <property type="molecule type" value="Genomic_DNA"/>
</dbReference>
<dbReference type="EMBL" id="AD000864">
    <property type="status" value="NOT_ANNOTATED_CDS"/>
    <property type="molecule type" value="Genomic_DNA"/>
</dbReference>
<dbReference type="EMBL" id="BC007312">
    <property type="protein sequence ID" value="AAH07312.1"/>
    <property type="molecule type" value="mRNA"/>
</dbReference>
<dbReference type="EMBL" id="BC064925">
    <property type="protein sequence ID" value="AAH64925.1"/>
    <property type="status" value="ALT_SEQ"/>
    <property type="molecule type" value="mRNA"/>
</dbReference>
<dbReference type="CCDS" id="CCDS12479.1">
    <molecule id="Q6UWL6-2"/>
</dbReference>
<dbReference type="CCDS" id="CCDS12480.1">
    <molecule id="Q6UWL6-3"/>
</dbReference>
<dbReference type="CCDS" id="CCDS12481.1">
    <molecule id="Q6UWL6-1"/>
</dbReference>
<dbReference type="RefSeq" id="NP_001316459.1">
    <property type="nucleotide sequence ID" value="NM_001329530.1"/>
</dbReference>
<dbReference type="RefSeq" id="NP_115499.5">
    <molecule id="Q6UWL6-2"/>
    <property type="nucleotide sequence ID" value="NM_032123.6"/>
</dbReference>
<dbReference type="RefSeq" id="NP_954648.3">
    <molecule id="Q6UWL6-3"/>
    <property type="nucleotide sequence ID" value="NM_199179.4"/>
</dbReference>
<dbReference type="RefSeq" id="NP_954649.3">
    <molecule id="Q6UWL6-1"/>
    <property type="nucleotide sequence ID" value="NM_199180.4"/>
</dbReference>
<dbReference type="RefSeq" id="XP_011525664.1">
    <molecule id="Q6UWL6-1"/>
    <property type="nucleotide sequence ID" value="XM_011527362.2"/>
</dbReference>
<dbReference type="RefSeq" id="XP_011525665.1">
    <molecule id="Q6UWL6-1"/>
    <property type="nucleotide sequence ID" value="XM_011527363.2"/>
</dbReference>
<dbReference type="RefSeq" id="XP_054178279.1">
    <molecule id="Q6UWL6-1"/>
    <property type="nucleotide sequence ID" value="XM_054322304.1"/>
</dbReference>
<dbReference type="RefSeq" id="XP_054178280.1">
    <molecule id="Q6UWL6-1"/>
    <property type="nucleotide sequence ID" value="XM_054322305.1"/>
</dbReference>
<dbReference type="SMR" id="Q6UWL6"/>
<dbReference type="BioGRID" id="123858">
    <property type="interactions" value="15"/>
</dbReference>
<dbReference type="FunCoup" id="Q6UWL6">
    <property type="interactions" value="67"/>
</dbReference>
<dbReference type="IntAct" id="Q6UWL6">
    <property type="interactions" value="11"/>
</dbReference>
<dbReference type="STRING" id="9606.ENSP00000353331"/>
<dbReference type="GlyCosmos" id="Q6UWL6">
    <property type="glycosylation" value="3 sites, No reported glycans"/>
</dbReference>
<dbReference type="GlyGen" id="Q6UWL6">
    <property type="glycosylation" value="5 sites"/>
</dbReference>
<dbReference type="iPTMnet" id="Q6UWL6"/>
<dbReference type="PhosphoSitePlus" id="Q6UWL6"/>
<dbReference type="SwissPalm" id="Q6UWL6"/>
<dbReference type="BioMuta" id="KIRREL2"/>
<dbReference type="DMDM" id="308153459"/>
<dbReference type="jPOST" id="Q6UWL6"/>
<dbReference type="MassIVE" id="Q6UWL6"/>
<dbReference type="PaxDb" id="9606-ENSP00000353331"/>
<dbReference type="PeptideAtlas" id="Q6UWL6"/>
<dbReference type="ProteomicsDB" id="67493">
    <molecule id="Q6UWL6-1"/>
</dbReference>
<dbReference type="ProteomicsDB" id="67494">
    <molecule id="Q6UWL6-2"/>
</dbReference>
<dbReference type="ProteomicsDB" id="67495">
    <molecule id="Q6UWL6-3"/>
</dbReference>
<dbReference type="ProteomicsDB" id="67497">
    <molecule id="Q6UWL6-5"/>
</dbReference>
<dbReference type="Antibodypedia" id="29564">
    <property type="antibodies" value="273 antibodies from 30 providers"/>
</dbReference>
<dbReference type="DNASU" id="84063"/>
<dbReference type="Ensembl" id="ENST00000262625.7">
    <molecule id="Q6UWL6-2"/>
    <property type="protein sequence ID" value="ENSP00000262625.6"/>
    <property type="gene ID" value="ENSG00000126259.20"/>
</dbReference>
<dbReference type="Ensembl" id="ENST00000347900.10">
    <molecule id="Q6UWL6-3"/>
    <property type="protein sequence ID" value="ENSP00000345067.5"/>
    <property type="gene ID" value="ENSG00000126259.20"/>
</dbReference>
<dbReference type="Ensembl" id="ENST00000360202.10">
    <molecule id="Q6UWL6-1"/>
    <property type="protein sequence ID" value="ENSP00000353331.4"/>
    <property type="gene ID" value="ENSG00000126259.20"/>
</dbReference>
<dbReference type="GeneID" id="84063"/>
<dbReference type="KEGG" id="hsa:84063"/>
<dbReference type="MANE-Select" id="ENST00000360202.10">
    <property type="protein sequence ID" value="ENSP00000353331.4"/>
    <property type="RefSeq nucleotide sequence ID" value="NM_199180.4"/>
    <property type="RefSeq protein sequence ID" value="NP_954649.3"/>
</dbReference>
<dbReference type="UCSC" id="uc002ocb.5">
    <molecule id="Q6UWL6-1"/>
    <property type="organism name" value="human"/>
</dbReference>
<dbReference type="AGR" id="HGNC:18816"/>
<dbReference type="CTD" id="84063"/>
<dbReference type="DisGeNET" id="84063"/>
<dbReference type="GeneCards" id="KIRREL2"/>
<dbReference type="HGNC" id="HGNC:18816">
    <property type="gene designation" value="KIRREL2"/>
</dbReference>
<dbReference type="HPA" id="ENSG00000126259">
    <property type="expression patterns" value="Tissue enriched (pancreas)"/>
</dbReference>
<dbReference type="MalaCards" id="KIRREL2"/>
<dbReference type="MIM" id="607762">
    <property type="type" value="gene"/>
</dbReference>
<dbReference type="neXtProt" id="NX_Q6UWL6"/>
<dbReference type="OpenTargets" id="ENSG00000126259"/>
<dbReference type="PharmGKB" id="PA38693"/>
<dbReference type="VEuPathDB" id="HostDB:ENSG00000126259"/>
<dbReference type="eggNOG" id="KOG3510">
    <property type="taxonomic scope" value="Eukaryota"/>
</dbReference>
<dbReference type="GeneTree" id="ENSGT00940000160603"/>
<dbReference type="InParanoid" id="Q6UWL6"/>
<dbReference type="OMA" id="TNFTCQA"/>
<dbReference type="OrthoDB" id="6413693at2759"/>
<dbReference type="PAN-GO" id="Q6UWL6">
    <property type="GO annotations" value="4 GO annotations based on evolutionary models"/>
</dbReference>
<dbReference type="PhylomeDB" id="Q6UWL6"/>
<dbReference type="TreeFam" id="TF327139"/>
<dbReference type="PathwayCommons" id="Q6UWL6"/>
<dbReference type="Reactome" id="R-HSA-373753">
    <property type="pathway name" value="Nephrin family interactions"/>
</dbReference>
<dbReference type="SignaLink" id="Q6UWL6"/>
<dbReference type="BioGRID-ORCS" id="84063">
    <property type="hits" value="37 hits in 1143 CRISPR screens"/>
</dbReference>
<dbReference type="ChiTaRS" id="KIRREL2">
    <property type="organism name" value="human"/>
</dbReference>
<dbReference type="GeneWiki" id="KIRREL2"/>
<dbReference type="GenomeRNAi" id="84063"/>
<dbReference type="Pharos" id="Q6UWL6">
    <property type="development level" value="Tbio"/>
</dbReference>
<dbReference type="PRO" id="PR:Q6UWL6"/>
<dbReference type="Proteomes" id="UP000005640">
    <property type="component" value="Chromosome 19"/>
</dbReference>
<dbReference type="RNAct" id="Q6UWL6">
    <property type="molecule type" value="protein"/>
</dbReference>
<dbReference type="Bgee" id="ENSG00000126259">
    <property type="expression patterns" value="Expressed in body of pancreas and 83 other cell types or tissues"/>
</dbReference>
<dbReference type="ExpressionAtlas" id="Q6UWL6">
    <property type="expression patterns" value="baseline and differential"/>
</dbReference>
<dbReference type="GO" id="GO:0005911">
    <property type="term" value="C:cell-cell junction"/>
    <property type="evidence" value="ECO:0000250"/>
    <property type="project" value="UniProtKB"/>
</dbReference>
<dbReference type="GO" id="GO:0016020">
    <property type="term" value="C:membrane"/>
    <property type="evidence" value="ECO:0000303"/>
    <property type="project" value="UniProtKB"/>
</dbReference>
<dbReference type="GO" id="GO:0005886">
    <property type="term" value="C:plasma membrane"/>
    <property type="evidence" value="ECO:0000250"/>
    <property type="project" value="UniProtKB"/>
</dbReference>
<dbReference type="GO" id="GO:0036057">
    <property type="term" value="C:slit diaphragm"/>
    <property type="evidence" value="ECO:0007669"/>
    <property type="project" value="Ensembl"/>
</dbReference>
<dbReference type="GO" id="GO:0050839">
    <property type="term" value="F:cell adhesion molecule binding"/>
    <property type="evidence" value="ECO:0000318"/>
    <property type="project" value="GO_Central"/>
</dbReference>
<dbReference type="GO" id="GO:0042802">
    <property type="term" value="F:identical protein binding"/>
    <property type="evidence" value="ECO:0000250"/>
    <property type="project" value="UniProtKB"/>
</dbReference>
<dbReference type="GO" id="GO:0007155">
    <property type="term" value="P:cell adhesion"/>
    <property type="evidence" value="ECO:0000303"/>
    <property type="project" value="UniProtKB"/>
</dbReference>
<dbReference type="GO" id="GO:0098609">
    <property type="term" value="P:cell-cell adhesion"/>
    <property type="evidence" value="ECO:0000318"/>
    <property type="project" value="GO_Central"/>
</dbReference>
<dbReference type="FunFam" id="2.60.40.10:FF:000896">
    <property type="entry name" value="kin of IRRE-like protein 2 isoform X2"/>
    <property type="match status" value="1"/>
</dbReference>
<dbReference type="FunFam" id="2.60.40.10:FF:000232">
    <property type="entry name" value="Kirre like nephrin family adhesion molecule 1"/>
    <property type="match status" value="1"/>
</dbReference>
<dbReference type="FunFam" id="2.60.40.10:FF:001109">
    <property type="entry name" value="Kirre like nephrin family adhesion molecule 2"/>
    <property type="match status" value="1"/>
</dbReference>
<dbReference type="FunFam" id="2.60.40.10:FF:000077">
    <property type="entry name" value="Kirre like nephrin family adhesion molecule 3"/>
    <property type="match status" value="1"/>
</dbReference>
<dbReference type="FunFam" id="2.60.40.10:FF:000103">
    <property type="entry name" value="Kirre like nephrin family adhesion molecule 3"/>
    <property type="match status" value="1"/>
</dbReference>
<dbReference type="Gene3D" id="2.60.40.10">
    <property type="entry name" value="Immunoglobulins"/>
    <property type="match status" value="5"/>
</dbReference>
<dbReference type="InterPro" id="IPR013162">
    <property type="entry name" value="CD80_C2-set"/>
</dbReference>
<dbReference type="InterPro" id="IPR051275">
    <property type="entry name" value="Cell_adhesion_signaling"/>
</dbReference>
<dbReference type="InterPro" id="IPR007110">
    <property type="entry name" value="Ig-like_dom"/>
</dbReference>
<dbReference type="InterPro" id="IPR036179">
    <property type="entry name" value="Ig-like_dom_sf"/>
</dbReference>
<dbReference type="InterPro" id="IPR013783">
    <property type="entry name" value="Ig-like_fold"/>
</dbReference>
<dbReference type="InterPro" id="IPR013098">
    <property type="entry name" value="Ig_I-set"/>
</dbReference>
<dbReference type="InterPro" id="IPR003599">
    <property type="entry name" value="Ig_sub"/>
</dbReference>
<dbReference type="InterPro" id="IPR003598">
    <property type="entry name" value="Ig_sub2"/>
</dbReference>
<dbReference type="PANTHER" id="PTHR11640:SF51">
    <property type="entry name" value="KIN OF IRRE-LIKE PROTEIN 2"/>
    <property type="match status" value="1"/>
</dbReference>
<dbReference type="PANTHER" id="PTHR11640">
    <property type="entry name" value="NEPHRIN"/>
    <property type="match status" value="1"/>
</dbReference>
<dbReference type="Pfam" id="PF08205">
    <property type="entry name" value="C2-set_2"/>
    <property type="match status" value="1"/>
</dbReference>
<dbReference type="Pfam" id="PF07679">
    <property type="entry name" value="I-set"/>
    <property type="match status" value="1"/>
</dbReference>
<dbReference type="Pfam" id="PF13927">
    <property type="entry name" value="Ig_3"/>
    <property type="match status" value="1"/>
</dbReference>
<dbReference type="SMART" id="SM00409">
    <property type="entry name" value="IG"/>
    <property type="match status" value="5"/>
</dbReference>
<dbReference type="SMART" id="SM00408">
    <property type="entry name" value="IGc2"/>
    <property type="match status" value="3"/>
</dbReference>
<dbReference type="SUPFAM" id="SSF48726">
    <property type="entry name" value="Immunoglobulin"/>
    <property type="match status" value="5"/>
</dbReference>
<dbReference type="PROSITE" id="PS50835">
    <property type="entry name" value="IG_LIKE"/>
    <property type="match status" value="5"/>
</dbReference>
<protein>
    <recommendedName>
        <fullName>Kin of IRRE-like protein 2</fullName>
    </recommendedName>
    <alternativeName>
        <fullName>Kin of irregular chiasm-like protein 2</fullName>
    </alternativeName>
    <alternativeName>
        <fullName>Nephrin-like protein 3</fullName>
    </alternativeName>
</protein>
<reference key="1">
    <citation type="journal article" date="2003" name="Genomics">
        <title>Kirrel2, a novel immunoglobulin superfamily gene expressed primarily in beta cells of the pancreatic islets.</title>
        <authorList>
            <person name="Sun C."/>
            <person name="Kilburn D."/>
            <person name="Lukashin A."/>
            <person name="Crowell T."/>
            <person name="Gardner H."/>
            <person name="Brundiers R."/>
            <person name="Diefenbach B."/>
            <person name="Carulli J.P."/>
        </authorList>
    </citation>
    <scope>NUCLEOTIDE SEQUENCE [MRNA] (ISOFORMS 1; 2; 3 AND 5)</scope>
    <scope>TISSUE SPECIFICITY</scope>
</reference>
<reference key="2">
    <citation type="journal article" date="2001" name="Genome Res.">
        <title>Towards a catalog of human genes and proteins: sequencing and analysis of 500 novel complete protein coding human cDNAs.</title>
        <authorList>
            <person name="Wiemann S."/>
            <person name="Weil B."/>
            <person name="Wellenreuther R."/>
            <person name="Gassenhuber J."/>
            <person name="Glassl S."/>
            <person name="Ansorge W."/>
            <person name="Boecher M."/>
            <person name="Bloecker H."/>
            <person name="Bauersachs S."/>
            <person name="Blum H."/>
            <person name="Lauber J."/>
            <person name="Duesterhoeft A."/>
            <person name="Beyer A."/>
            <person name="Koehrer K."/>
            <person name="Strack N."/>
            <person name="Mewes H.-W."/>
            <person name="Ottenwaelder B."/>
            <person name="Obermaier B."/>
            <person name="Tampe J."/>
            <person name="Heubner D."/>
            <person name="Wambutt R."/>
            <person name="Korn B."/>
            <person name="Klein M."/>
            <person name="Poustka A."/>
        </authorList>
    </citation>
    <scope>NUCLEOTIDE SEQUENCE [LARGE SCALE MRNA] (ISOFORM 1)</scope>
    <source>
        <tissue>Brain</tissue>
    </source>
</reference>
<reference key="3">
    <citation type="journal article" date="2007" name="BMC Genomics">
        <title>The full-ORF clone resource of the German cDNA consortium.</title>
        <authorList>
            <person name="Bechtel S."/>
            <person name="Rosenfelder H."/>
            <person name="Duda A."/>
            <person name="Schmidt C.P."/>
            <person name="Ernst U."/>
            <person name="Wellenreuther R."/>
            <person name="Mehrle A."/>
            <person name="Schuster C."/>
            <person name="Bahr A."/>
            <person name="Bloecker H."/>
            <person name="Heubner D."/>
            <person name="Hoerlein A."/>
            <person name="Michel G."/>
            <person name="Wedler H."/>
            <person name="Koehrer K."/>
            <person name="Ottenwaelder B."/>
            <person name="Poustka A."/>
            <person name="Wiemann S."/>
            <person name="Schupp I."/>
        </authorList>
    </citation>
    <scope>SEQUENCE REVISION</scope>
</reference>
<reference key="4">
    <citation type="journal article" date="2003" name="Genome Res.">
        <title>The secreted protein discovery initiative (SPDI), a large-scale effort to identify novel human secreted and transmembrane proteins: a bioinformatics assessment.</title>
        <authorList>
            <person name="Clark H.F."/>
            <person name="Gurney A.L."/>
            <person name="Abaya E."/>
            <person name="Baker K."/>
            <person name="Baldwin D.T."/>
            <person name="Brush J."/>
            <person name="Chen J."/>
            <person name="Chow B."/>
            <person name="Chui C."/>
            <person name="Crowley C."/>
            <person name="Currell B."/>
            <person name="Deuel B."/>
            <person name="Dowd P."/>
            <person name="Eaton D."/>
            <person name="Foster J.S."/>
            <person name="Grimaldi C."/>
            <person name="Gu Q."/>
            <person name="Hass P.E."/>
            <person name="Heldens S."/>
            <person name="Huang A."/>
            <person name="Kim H.S."/>
            <person name="Klimowski L."/>
            <person name="Jin Y."/>
            <person name="Johnson S."/>
            <person name="Lee J."/>
            <person name="Lewis L."/>
            <person name="Liao D."/>
            <person name="Mark M.R."/>
            <person name="Robbie E."/>
            <person name="Sanchez C."/>
            <person name="Schoenfeld J."/>
            <person name="Seshagiri S."/>
            <person name="Simmons L."/>
            <person name="Singh J."/>
            <person name="Smith V."/>
            <person name="Stinson J."/>
            <person name="Vagts A."/>
            <person name="Vandlen R.L."/>
            <person name="Watanabe C."/>
            <person name="Wieand D."/>
            <person name="Woods K."/>
            <person name="Xie M.-H."/>
            <person name="Yansura D.G."/>
            <person name="Yi S."/>
            <person name="Yu G."/>
            <person name="Yuan J."/>
            <person name="Zhang M."/>
            <person name="Zhang Z."/>
            <person name="Goddard A.D."/>
            <person name="Wood W.I."/>
            <person name="Godowski P.J."/>
            <person name="Gray A.M."/>
        </authorList>
    </citation>
    <scope>NUCLEOTIDE SEQUENCE [LARGE SCALE MRNA] (ISOFORM 1)</scope>
</reference>
<reference key="5">
    <citation type="journal article" date="2011" name="Invest. Ophthalmol. Vis. Sci.">
        <title>Full-length transcriptome analysis of human retina-derived cell lines ARPE-19 and Y79 using the vector-capping method.</title>
        <authorList>
            <person name="Oshikawa M."/>
            <person name="Tsutsui C."/>
            <person name="Ikegami T."/>
            <person name="Fuchida Y."/>
            <person name="Matsubara M."/>
            <person name="Toyama S."/>
            <person name="Usami R."/>
            <person name="Ohtoko K."/>
            <person name="Kato S."/>
        </authorList>
    </citation>
    <scope>NUCLEOTIDE SEQUENCE [LARGE SCALE MRNA]</scope>
</reference>
<reference key="6">
    <citation type="journal article" date="2004" name="Nature">
        <title>The DNA sequence and biology of human chromosome 19.</title>
        <authorList>
            <person name="Grimwood J."/>
            <person name="Gordon L.A."/>
            <person name="Olsen A.S."/>
            <person name="Terry A."/>
            <person name="Schmutz J."/>
            <person name="Lamerdin J.E."/>
            <person name="Hellsten U."/>
            <person name="Goodstein D."/>
            <person name="Couronne O."/>
            <person name="Tran-Gyamfi M."/>
            <person name="Aerts A."/>
            <person name="Altherr M."/>
            <person name="Ashworth L."/>
            <person name="Bajorek E."/>
            <person name="Black S."/>
            <person name="Branscomb E."/>
            <person name="Caenepeel S."/>
            <person name="Carrano A.V."/>
            <person name="Caoile C."/>
            <person name="Chan Y.M."/>
            <person name="Christensen M."/>
            <person name="Cleland C.A."/>
            <person name="Copeland A."/>
            <person name="Dalin E."/>
            <person name="Dehal P."/>
            <person name="Denys M."/>
            <person name="Detter J.C."/>
            <person name="Escobar J."/>
            <person name="Flowers D."/>
            <person name="Fotopulos D."/>
            <person name="Garcia C."/>
            <person name="Georgescu A.M."/>
            <person name="Glavina T."/>
            <person name="Gomez M."/>
            <person name="Gonzales E."/>
            <person name="Groza M."/>
            <person name="Hammon N."/>
            <person name="Hawkins T."/>
            <person name="Haydu L."/>
            <person name="Ho I."/>
            <person name="Huang W."/>
            <person name="Israni S."/>
            <person name="Jett J."/>
            <person name="Kadner K."/>
            <person name="Kimball H."/>
            <person name="Kobayashi A."/>
            <person name="Larionov V."/>
            <person name="Leem S.-H."/>
            <person name="Lopez F."/>
            <person name="Lou Y."/>
            <person name="Lowry S."/>
            <person name="Malfatti S."/>
            <person name="Martinez D."/>
            <person name="McCready P.M."/>
            <person name="Medina C."/>
            <person name="Morgan J."/>
            <person name="Nelson K."/>
            <person name="Nolan M."/>
            <person name="Ovcharenko I."/>
            <person name="Pitluck S."/>
            <person name="Pollard M."/>
            <person name="Popkie A.P."/>
            <person name="Predki P."/>
            <person name="Quan G."/>
            <person name="Ramirez L."/>
            <person name="Rash S."/>
            <person name="Retterer J."/>
            <person name="Rodriguez A."/>
            <person name="Rogers S."/>
            <person name="Salamov A."/>
            <person name="Salazar A."/>
            <person name="She X."/>
            <person name="Smith D."/>
            <person name="Slezak T."/>
            <person name="Solovyev V."/>
            <person name="Thayer N."/>
            <person name="Tice H."/>
            <person name="Tsai M."/>
            <person name="Ustaszewska A."/>
            <person name="Vo N."/>
            <person name="Wagner M."/>
            <person name="Wheeler J."/>
            <person name="Wu K."/>
            <person name="Xie G."/>
            <person name="Yang J."/>
            <person name="Dubchak I."/>
            <person name="Furey T.S."/>
            <person name="DeJong P."/>
            <person name="Dickson M."/>
            <person name="Gordon D."/>
            <person name="Eichler E.E."/>
            <person name="Pennacchio L.A."/>
            <person name="Richardson P."/>
            <person name="Stubbs L."/>
            <person name="Rokhsar D.S."/>
            <person name="Myers R.M."/>
            <person name="Rubin E.M."/>
            <person name="Lucas S.M."/>
        </authorList>
    </citation>
    <scope>NUCLEOTIDE SEQUENCE [LARGE SCALE GENOMIC DNA]</scope>
</reference>
<reference key="7">
    <citation type="journal article" date="2004" name="Genome Res.">
        <title>The status, quality, and expansion of the NIH full-length cDNA project: the Mammalian Gene Collection (MGC).</title>
        <authorList>
            <consortium name="The MGC Project Team"/>
        </authorList>
    </citation>
    <scope>NUCLEOTIDE SEQUENCE [LARGE SCALE MRNA] (ISOFORM 5)</scope>
    <source>
        <tissue>Eye</tissue>
    </source>
</reference>
<reference key="8">
    <citation type="journal article" date="2004" name="Protein Sci.">
        <title>Signal peptide prediction based on analysis of experimentally verified cleavage sites.</title>
        <authorList>
            <person name="Zhang Z."/>
            <person name="Henzel W.J."/>
        </authorList>
    </citation>
    <scope>PROTEIN SEQUENCE OF 21-35</scope>
</reference>
<feature type="signal peptide" evidence="6">
    <location>
        <begin position="1"/>
        <end position="20"/>
    </location>
</feature>
<feature type="chain" id="PRO_0000015096" description="Kin of IRRE-like protein 2">
    <location>
        <begin position="21"/>
        <end position="708"/>
    </location>
</feature>
<feature type="topological domain" description="Extracellular" evidence="2">
    <location>
        <begin position="21"/>
        <end position="510"/>
    </location>
</feature>
<feature type="transmembrane region" description="Helical" evidence="2">
    <location>
        <begin position="511"/>
        <end position="531"/>
    </location>
</feature>
<feature type="topological domain" description="Cytoplasmic" evidence="2">
    <location>
        <begin position="532"/>
        <end position="708"/>
    </location>
</feature>
<feature type="domain" description="Ig-like C2-type 1">
    <location>
        <begin position="24"/>
        <end position="118"/>
    </location>
</feature>
<feature type="domain" description="Ig-like C2-type 2">
    <location>
        <begin position="123"/>
        <end position="222"/>
    </location>
</feature>
<feature type="domain" description="Ig-like C2-type 3">
    <location>
        <begin position="227"/>
        <end position="307"/>
    </location>
</feature>
<feature type="domain" description="Ig-like C2-type 4">
    <location>
        <begin position="312"/>
        <end position="394"/>
    </location>
</feature>
<feature type="domain" description="Ig-like C2-type 5">
    <location>
        <begin position="398"/>
        <end position="501"/>
    </location>
</feature>
<feature type="region of interest" description="Disordered" evidence="4">
    <location>
        <begin position="545"/>
        <end position="601"/>
    </location>
</feature>
<feature type="region of interest" description="Disordered" evidence="4">
    <location>
        <begin position="684"/>
        <end position="708"/>
    </location>
</feature>
<feature type="short sequence motif" description="Cell attachment site" evidence="2">
    <location>
        <begin position="149"/>
        <end position="151"/>
    </location>
</feature>
<feature type="compositionally biased region" description="Low complexity" evidence="4">
    <location>
        <begin position="553"/>
        <end position="562"/>
    </location>
</feature>
<feature type="compositionally biased region" description="Basic and acidic residues" evidence="4">
    <location>
        <begin position="569"/>
        <end position="586"/>
    </location>
</feature>
<feature type="modified residue" description="Phosphoserine" evidence="1">
    <location>
        <position position="571"/>
    </location>
</feature>
<feature type="modified residue" description="Phosphotyrosine" evidence="1">
    <location>
        <position position="603"/>
    </location>
</feature>
<feature type="modified residue" description="Phosphotyrosine" evidence="1">
    <location>
        <position position="604"/>
    </location>
</feature>
<feature type="modified residue" description="Phosphotyrosine" evidence="1">
    <location>
        <position position="661"/>
    </location>
</feature>
<feature type="glycosylation site" description="N-linked (GlcNAc...) asparagine" evidence="2">
    <location>
        <position position="143"/>
    </location>
</feature>
<feature type="glycosylation site" description="N-linked (GlcNAc...) asparagine" evidence="2">
    <location>
        <position position="301"/>
    </location>
</feature>
<feature type="glycosylation site" description="N-linked (GlcNAc...) asparagine" evidence="2">
    <location>
        <position position="484"/>
    </location>
</feature>
<feature type="disulfide bond" evidence="3">
    <location>
        <begin position="45"/>
        <end position="103"/>
    </location>
</feature>
<feature type="disulfide bond" evidence="3">
    <location>
        <begin position="146"/>
        <end position="204"/>
    </location>
</feature>
<feature type="disulfide bond" evidence="3">
    <location>
        <begin position="248"/>
        <end position="291"/>
    </location>
</feature>
<feature type="disulfide bond" evidence="3">
    <location>
        <begin position="333"/>
        <end position="375"/>
    </location>
</feature>
<feature type="disulfide bond" evidence="3">
    <location>
        <begin position="419"/>
        <end position="485"/>
    </location>
</feature>
<feature type="splice variant" id="VSP_011780" description="In isoform 3." evidence="7">
    <location>
        <begin position="21"/>
        <end position="70"/>
    </location>
</feature>
<feature type="splice variant" id="VSP_011781" description="In isoform 5." evidence="7 8">
    <location>
        <begin position="37"/>
        <end position="490"/>
    </location>
</feature>
<feature type="splice variant" id="VSP_011783" description="In isoform 5." evidence="7 8">
    <location>
        <begin position="504"/>
        <end position="538"/>
    </location>
</feature>
<feature type="splice variant" id="VSP_011784" description="In isoform 2 and isoform 3." evidence="7">
    <original>VSLSLGEAPGGGLFLPPPSPLGP</original>
    <variation>PPASPDSRVTSFQWKSPGISNLP</variation>
    <location>
        <begin position="611"/>
        <end position="633"/>
    </location>
</feature>
<feature type="splice variant" id="VSP_011785" description="In isoform 2 and isoform 3." evidence="7">
    <location>
        <begin position="634"/>
        <end position="708"/>
    </location>
</feature>
<feature type="sequence variant" id="VAR_056098" description="In dbSNP:rs446014.">
    <original>R</original>
    <variation>S</variation>
    <location>
        <position position="19"/>
    </location>
</feature>
<feature type="sequence variant" id="VAR_056099" description="In dbSNP:rs404299.">
    <original>A</original>
    <variation>T</variation>
    <location>
        <position position="170"/>
    </location>
</feature>
<feature type="sequence variant" id="VAR_056100" description="In dbSNP:rs35423326.">
    <original>V</original>
    <variation>M</variation>
    <location>
        <position position="353"/>
    </location>
</feature>
<feature type="sequence variant" id="VAR_056101" description="In dbSNP:rs35775934.">
    <original>S</original>
    <variation>N</variation>
    <location>
        <position position="556"/>
    </location>
</feature>
<feature type="sequence variant" id="VAR_067450" description="In dbSNP:rs382789.">
    <original>E</original>
    <variation>K</variation>
    <location>
        <position position="591"/>
    </location>
</feature>
<feature type="sequence conflict" description="In Ref. 1; AAP72167." evidence="9" ref="1">
    <original>R</original>
    <variation>W</variation>
    <location>
        <position position="3"/>
    </location>
</feature>
<feature type="sequence conflict" description="In Ref. 3; CAB66589." evidence="9" ref="3">
    <original>T</original>
    <variation>A</variation>
    <location>
        <position position="155"/>
    </location>
</feature>
<feature type="sequence conflict" description="In Ref. 1; AAP72166." evidence="9" ref="1">
    <original>F</original>
    <variation>L</variation>
    <location>
        <position position="202"/>
    </location>
</feature>
<feature type="sequence conflict" description="In Ref. 1; AAP72166/AAP72167." evidence="9" ref="1">
    <original>G</original>
    <variation>D</variation>
    <location>
        <position position="371"/>
    </location>
</feature>
<feature type="sequence conflict" description="In Ref. 1; AAP72167." evidence="9" ref="1">
    <original>A</original>
    <variation>V</variation>
    <location>
        <position position="389"/>
    </location>
</feature>
<feature type="sequence conflict" description="In Ref. 1; AAP72167." evidence="9" ref="1">
    <original>N</original>
    <variation>D</variation>
    <location>
        <position position="396"/>
    </location>
</feature>
<feature type="sequence conflict" description="In Ref. 1; AAP72166/AAP72167." evidence="9" ref="1">
    <original>A</original>
    <variation>V</variation>
    <location>
        <position position="516"/>
    </location>
</feature>